<evidence type="ECO:0000255" key="1">
    <source>
        <dbReference type="PROSITE-ProRule" id="PRU00316"/>
    </source>
</evidence>
<evidence type="ECO:0000269" key="2">
    <source>
    </source>
</evidence>
<evidence type="ECO:0000269" key="3">
    <source>
    </source>
</evidence>
<evidence type="ECO:0000269" key="4">
    <source>
    </source>
</evidence>
<evidence type="ECO:0000269" key="5">
    <source>
    </source>
</evidence>
<evidence type="ECO:0000269" key="6">
    <source>
    </source>
</evidence>
<evidence type="ECO:0000305" key="7"/>
<evidence type="ECO:0007829" key="8">
    <source>
        <dbReference type="PDB" id="8XCG"/>
    </source>
</evidence>
<evidence type="ECO:0007829" key="9">
    <source>
        <dbReference type="PDB" id="8XCJ"/>
    </source>
</evidence>
<evidence type="ECO:0007829" key="10">
    <source>
        <dbReference type="PDB" id="8XCK"/>
    </source>
</evidence>
<reference key="1">
    <citation type="journal article" date="1982" name="J. Mol. Biol.">
        <title>Nucleotide sequence of bacteriophage lambda DNA.</title>
        <authorList>
            <person name="Sanger F."/>
            <person name="Coulson A.R."/>
            <person name="Hong G.F."/>
            <person name="Hill D.F."/>
            <person name="Petersen G.B."/>
        </authorList>
    </citation>
    <scope>NUCLEOTIDE SEQUENCE [LARGE SCALE GENOMIC DNA]</scope>
</reference>
<reference key="2">
    <citation type="journal article" date="1984" name="J. Bacteriol.">
        <title>Proteinase sensitivity of bacteriophage lambda tail proteins gpJ and pH in complexes with the lambda receptor.</title>
        <authorList>
            <person name="Roessner C.A."/>
            <person name="Ihler G.M."/>
        </authorList>
    </citation>
    <scope>FUNCTION</scope>
</reference>
<reference key="3">
    <citation type="journal article" date="1994" name="J. Bacteriol.">
        <title>Adsorption of bacteriophage lambda on the LamB protein of Escherichia coli K-12: point mutations in gene J of lambda responsible for extended host range.</title>
        <authorList>
            <person name="Werts C."/>
            <person name="Michel V."/>
            <person name="Hofnung M."/>
            <person name="Charbit A."/>
        </authorList>
    </citation>
    <scope>INTERACTION WITH HOST LAMB</scope>
</reference>
<reference key="4">
    <citation type="journal article" date="1998" name="Res. Microbiol.">
        <title>Cloning of the J gene of bacteriophage lambda, expression and solubilization of the J protein: first in vitro studies on the interactions between J and LamB, its cell surface receptor.</title>
        <authorList>
            <person name="Wang J."/>
            <person name="Michel V."/>
            <person name="Hofnung M."/>
            <person name="Charbit A."/>
        </authorList>
    </citation>
    <scope>INTERACTION WITH HOST LAMB</scope>
</reference>
<reference key="5">
    <citation type="journal article" date="2000" name="J. Bacteriol.">
        <title>The C-terminal portion of the tail fiber protein of bacteriophage lambda is responsible for binding to LamB, its receptor at the surface of Escherichia coli K-12.</title>
        <authorList>
            <person name="Wang J."/>
            <person name="Hofnung M."/>
            <person name="Charbit A."/>
        </authorList>
    </citation>
    <scope>INTERACTION WITH HOST LAMB</scope>
</reference>
<reference key="6">
    <citation type="journal article" date="2006" name="Biochemistry">
        <title>Interaction of bacteriophage lambda with its cell surface receptor: an in vitro study of binding of the viral tail protein gpJ to LamB (Maltoporin).</title>
        <authorList>
            <person name="Berkane E."/>
            <person name="Orlik F."/>
            <person name="Stegmeier J.F."/>
            <person name="Charbit A."/>
            <person name="Winterhalter M."/>
            <person name="Benz R."/>
        </authorList>
    </citation>
    <scope>INTERACTION WITH HOST LAMB</scope>
</reference>
<reference key="7">
    <citation type="journal article" date="2012" name="Viruses">
        <title>Interaction of bacteriophage l with its E. coli receptor, LamB.</title>
        <authorList>
            <person name="Chatterjee S."/>
            <person name="Rothenberg E."/>
        </authorList>
    </citation>
    <scope>REVIEW</scope>
</reference>
<accession>P03749</accession>
<gene>
    <name type="primary">J</name>
    <name type="ordered locus">lambdap21</name>
</gene>
<protein>
    <recommendedName>
        <fullName>Tip attachment protein J</fullName>
    </recommendedName>
    <alternativeName>
        <fullName>Central tail fiber</fullName>
    </alternativeName>
    <alternativeName>
        <fullName>Host specificity protein J</fullName>
    </alternativeName>
    <alternativeName>
        <fullName evidence="7">gpJ protein</fullName>
    </alternativeName>
</protein>
<sequence>MGKGSSKGHTPREAKDNLKSTQLLSVIDAISEGPIEGPVDGLKSVLLNSTPVLDTEGNTNISGVTVVFRAGEQEQTPPEGFESSGSETVLGTEVKYDTPITRTITSANIDRLRFTFGVQALVETTSKGDRNPSEVRLLVQIQRNGGWVTEKDITIKGKTTSQYLASVVMGNLPPRPFNIRMRRMTPDSTTDQLQNKTLWSSYTEIIDVKQCYPNTALVGVQVDSEQFGSQQVSRNYHLRGRILQVPSNYNPQTRQYSGIWDGTFKPAYSNNMAWCLWDMLTHPRYGMGKRLGAADVDKWALYVIGQYCDQSVPDGFGGTEPRITCNAYLTTQRKAWDVLSDFCSAMRCMPVWNGQTLTFVQDRPSDKTWTYNRSNVVMPDDGAPFRYSFSALKDRHNAVEVNWIDPNNGWETATELVEDTQAIARYGRNVTKMDAFGCTSRGQAHRAGLWLIKTELLETQTVDFSVGAEGLRHVPGDVIEICDDDYAGISTGGRVLAVNSQTRTLTLDREITLPSSGTALISLVDGSGNPVSVEVQSVTDGVKVKVSRVPDGVAEYSVWELKLPTLRQRLFRCVSIRENDDGTYAITAVQHVPEKEAIVDNGAHFDGEQSGTVNGVTPPAVQHLTAEVTADSGEYQVLARWDTPKVVKGVSFLLRLTVTADDGSERLVSTARTTETTYRFTQLALGNYRLTVRAVNAWGQQGDPASVSFRIAAPAAPSRIELTPGYFQITATPHLAVYDPTVQFEFWFSEKQIADIRQVETSTRYLGTALYWIAASINIKPGHDYYFYIRSVNTVGKSAFVEAVGRASDDAEGYLDFFKGKITESHLGKELLEKVELTEDNASRLEEFSKEWKDASDKWNAMWAVKIEQTKDGKHYVAGIGLSMEDTEEGKLSQFLVAANRIAFIDPANGNETPMFVAQGNQIFMNDVFLKRLTAPTITSGGNPPAFSLTPDGKLTAKNADISGSVNANSGTLSNVTIAENCTINGTLRAEKIVGDIVKAASAAFPRQRESSVDWPSGTRTVTVTDDHPFDRQIVVLPLTFRGSKRTVSGRTTYSMCYLKVLMNGAVIYDGAANEAVQVFSRIVDMPAGRGNVILTFTLTSTRHSADIPPYTFASDVQVMVIKKQALGISVV</sequence>
<feature type="chain" id="PRO_0000077645" description="Tip attachment protein J">
    <location>
        <begin position="1"/>
        <end position="1132"/>
    </location>
</feature>
<feature type="domain" description="Fibronectin type-III 1" evidence="1">
    <location>
        <begin position="618"/>
        <end position="711"/>
    </location>
</feature>
<feature type="domain" description="Fibronectin type-III 2" evidence="1">
    <location>
        <begin position="712"/>
        <end position="807"/>
    </location>
</feature>
<feature type="region of interest" description="Interaction with host LamB" evidence="2">
    <location>
        <begin position="883"/>
        <end position="1132"/>
    </location>
</feature>
<feature type="strand" evidence="8">
    <location>
        <begin position="21"/>
        <end position="26"/>
    </location>
</feature>
<feature type="strand" evidence="8">
    <location>
        <begin position="28"/>
        <end position="31"/>
    </location>
</feature>
<feature type="strand" evidence="8">
    <location>
        <begin position="33"/>
        <end position="41"/>
    </location>
</feature>
<feature type="helix" evidence="8">
    <location>
        <begin position="42"/>
        <end position="44"/>
    </location>
</feature>
<feature type="strand" evidence="8">
    <location>
        <begin position="61"/>
        <end position="66"/>
    </location>
</feature>
<feature type="strand" evidence="8">
    <location>
        <begin position="85"/>
        <end position="94"/>
    </location>
</feature>
<feature type="strand" evidence="8">
    <location>
        <begin position="111"/>
        <end position="119"/>
    </location>
</feature>
<feature type="strand" evidence="8">
    <location>
        <begin position="126"/>
        <end position="128"/>
    </location>
</feature>
<feature type="strand" evidence="8">
    <location>
        <begin position="135"/>
        <end position="141"/>
    </location>
</feature>
<feature type="strand" evidence="8">
    <location>
        <begin position="144"/>
        <end position="146"/>
    </location>
</feature>
<feature type="strand" evidence="8">
    <location>
        <begin position="148"/>
        <end position="155"/>
    </location>
</feature>
<feature type="strand" evidence="8">
    <location>
        <begin position="163"/>
        <end position="170"/>
    </location>
</feature>
<feature type="strand" evidence="8">
    <location>
        <begin position="179"/>
        <end position="183"/>
    </location>
</feature>
<feature type="strand" evidence="8">
    <location>
        <begin position="190"/>
        <end position="193"/>
    </location>
</feature>
<feature type="strand" evidence="8">
    <location>
        <begin position="197"/>
        <end position="205"/>
    </location>
</feature>
<feature type="strand" evidence="8">
    <location>
        <begin position="220"/>
        <end position="223"/>
    </location>
</feature>
<feature type="helix" evidence="8">
    <location>
        <begin position="224"/>
        <end position="226"/>
    </location>
</feature>
<feature type="strand" evidence="8">
    <location>
        <begin position="238"/>
        <end position="241"/>
    </location>
</feature>
<feature type="strand" evidence="8">
    <location>
        <begin position="244"/>
        <end position="246"/>
    </location>
</feature>
<feature type="turn" evidence="8">
    <location>
        <begin position="251"/>
        <end position="254"/>
    </location>
</feature>
<feature type="strand" evidence="8">
    <location>
        <begin position="264"/>
        <end position="266"/>
    </location>
</feature>
<feature type="helix" evidence="8">
    <location>
        <begin position="272"/>
        <end position="281"/>
    </location>
</feature>
<feature type="turn" evidence="8">
    <location>
        <begin position="283"/>
        <end position="285"/>
    </location>
</feature>
<feature type="turn" evidence="8">
    <location>
        <begin position="288"/>
        <end position="290"/>
    </location>
</feature>
<feature type="helix" evidence="8">
    <location>
        <begin position="298"/>
        <end position="309"/>
    </location>
</feature>
<feature type="strand" evidence="8">
    <location>
        <begin position="310"/>
        <end position="313"/>
    </location>
</feature>
<feature type="strand" evidence="8">
    <location>
        <begin position="315"/>
        <end position="317"/>
    </location>
</feature>
<feature type="strand" evidence="8">
    <location>
        <begin position="319"/>
        <end position="322"/>
    </location>
</feature>
<feature type="helix" evidence="8">
    <location>
        <begin position="335"/>
        <end position="345"/>
    </location>
</feature>
<feature type="strand" evidence="8">
    <location>
        <begin position="350"/>
        <end position="353"/>
    </location>
</feature>
<feature type="strand" evidence="8">
    <location>
        <begin position="356"/>
        <end position="359"/>
    </location>
</feature>
<feature type="strand" evidence="8">
    <location>
        <begin position="368"/>
        <end position="372"/>
    </location>
</feature>
<feature type="turn" evidence="8">
    <location>
        <begin position="373"/>
        <end position="375"/>
    </location>
</feature>
<feature type="strand" evidence="8">
    <location>
        <begin position="380"/>
        <end position="382"/>
    </location>
</feature>
<feature type="strand" evidence="8">
    <location>
        <begin position="384"/>
        <end position="389"/>
    </location>
</feature>
<feature type="helix" evidence="8">
    <location>
        <begin position="392"/>
        <end position="394"/>
    </location>
</feature>
<feature type="strand" evidence="8">
    <location>
        <begin position="398"/>
        <end position="405"/>
    </location>
</feature>
<feature type="strand" evidence="8">
    <location>
        <begin position="408"/>
        <end position="418"/>
    </location>
</feature>
<feature type="helix" evidence="8">
    <location>
        <begin position="420"/>
        <end position="426"/>
    </location>
</feature>
<feature type="strand" evidence="8">
    <location>
        <begin position="430"/>
        <end position="434"/>
    </location>
</feature>
<feature type="helix" evidence="8">
    <location>
        <begin position="441"/>
        <end position="457"/>
    </location>
</feature>
<feature type="strand" evidence="8">
    <location>
        <begin position="460"/>
        <end position="463"/>
    </location>
</feature>
<feature type="helix" evidence="8">
    <location>
        <begin position="468"/>
        <end position="472"/>
    </location>
</feature>
<feature type="strand" evidence="8">
    <location>
        <begin position="478"/>
        <end position="482"/>
    </location>
</feature>
<feature type="helix" evidence="8">
    <location>
        <begin position="484"/>
        <end position="487"/>
    </location>
</feature>
<feature type="strand" evidence="8">
    <location>
        <begin position="493"/>
        <end position="499"/>
    </location>
</feature>
<feature type="turn" evidence="8">
    <location>
        <begin position="500"/>
        <end position="503"/>
    </location>
</feature>
<feature type="strand" evidence="8">
    <location>
        <begin position="504"/>
        <end position="509"/>
    </location>
</feature>
<feature type="strand" evidence="8">
    <location>
        <begin position="515"/>
        <end position="517"/>
    </location>
</feature>
<feature type="strand" evidence="8">
    <location>
        <begin position="520"/>
        <end position="524"/>
    </location>
</feature>
<feature type="strand" evidence="8">
    <location>
        <begin position="530"/>
        <end position="539"/>
    </location>
</feature>
<feature type="turn" evidence="8">
    <location>
        <begin position="540"/>
        <end position="542"/>
    </location>
</feature>
<feature type="strand" evidence="8">
    <location>
        <begin position="543"/>
        <end position="547"/>
    </location>
</feature>
<feature type="strand" evidence="8">
    <location>
        <begin position="558"/>
        <end position="562"/>
    </location>
</feature>
<feature type="strand" evidence="8">
    <location>
        <begin position="570"/>
        <end position="578"/>
    </location>
</feature>
<feature type="strand" evidence="8">
    <location>
        <begin position="580"/>
        <end position="582"/>
    </location>
</feature>
<feature type="strand" evidence="8">
    <location>
        <begin position="584"/>
        <end position="590"/>
    </location>
</feature>
<feature type="helix" evidence="8">
    <location>
        <begin position="595"/>
        <end position="600"/>
    </location>
</feature>
<feature type="strand" evidence="9">
    <location>
        <begin position="718"/>
        <end position="725"/>
    </location>
</feature>
<feature type="strand" evidence="9">
    <location>
        <begin position="728"/>
        <end position="734"/>
    </location>
</feature>
<feature type="strand" evidence="9">
    <location>
        <begin position="743"/>
        <end position="751"/>
    </location>
</feature>
<feature type="helix" evidence="9">
    <location>
        <begin position="759"/>
        <end position="762"/>
    </location>
</feature>
<feature type="strand" evidence="9">
    <location>
        <begin position="763"/>
        <end position="775"/>
    </location>
</feature>
<feature type="strand" evidence="9">
    <location>
        <begin position="785"/>
        <end position="792"/>
    </location>
</feature>
<feature type="strand" evidence="9">
    <location>
        <begin position="801"/>
        <end position="805"/>
    </location>
</feature>
<feature type="helix" evidence="9">
    <location>
        <begin position="811"/>
        <end position="823"/>
    </location>
</feature>
<feature type="strand" evidence="9">
    <location>
        <begin position="825"/>
        <end position="827"/>
    </location>
</feature>
<feature type="helix" evidence="10">
    <location>
        <begin position="829"/>
        <end position="831"/>
    </location>
</feature>
<feature type="helix" evidence="10">
    <location>
        <begin position="837"/>
        <end position="859"/>
    </location>
</feature>
<feature type="strand" evidence="10">
    <location>
        <begin position="863"/>
        <end position="868"/>
    </location>
</feature>
<feature type="strand" evidence="10">
    <location>
        <begin position="876"/>
        <end position="884"/>
    </location>
</feature>
<feature type="strand" evidence="10">
    <location>
        <begin position="889"/>
        <end position="891"/>
    </location>
</feature>
<feature type="strand" evidence="10">
    <location>
        <begin position="895"/>
        <end position="897"/>
    </location>
</feature>
<feature type="strand" evidence="10">
    <location>
        <begin position="899"/>
        <end position="905"/>
    </location>
</feature>
<feature type="turn" evidence="10">
    <location>
        <begin position="907"/>
        <end position="909"/>
    </location>
</feature>
<feature type="strand" evidence="10">
    <location>
        <begin position="912"/>
        <end position="921"/>
    </location>
</feature>
<feature type="strand" evidence="10">
    <location>
        <begin position="923"/>
        <end position="925"/>
    </location>
</feature>
<feature type="strand" evidence="10">
    <location>
        <begin position="927"/>
        <end position="929"/>
    </location>
</feature>
<feature type="strand" evidence="10">
    <location>
        <begin position="932"/>
        <end position="935"/>
    </location>
</feature>
<feature type="strand" evidence="10">
    <location>
        <begin position="937"/>
        <end position="939"/>
    </location>
</feature>
<feature type="strand" evidence="10">
    <location>
        <begin position="941"/>
        <end position="944"/>
    </location>
</feature>
<feature type="strand" evidence="9">
    <location>
        <begin position="946"/>
        <end position="949"/>
    </location>
</feature>
<feature type="strand" evidence="10">
    <location>
        <begin position="958"/>
        <end position="964"/>
    </location>
</feature>
<feature type="strand" evidence="10">
    <location>
        <begin position="969"/>
        <end position="975"/>
    </location>
</feature>
<feature type="strand" evidence="10">
    <location>
        <begin position="990"/>
        <end position="995"/>
    </location>
</feature>
<feature type="strand" evidence="10">
    <location>
        <begin position="997"/>
        <end position="1003"/>
    </location>
</feature>
<feature type="strand" evidence="10">
    <location>
        <begin position="1007"/>
        <end position="1010"/>
    </location>
</feature>
<feature type="strand" evidence="10">
    <location>
        <begin position="1013"/>
        <end position="1016"/>
    </location>
</feature>
<feature type="strand" evidence="10">
    <location>
        <begin position="1018"/>
        <end position="1024"/>
    </location>
</feature>
<feature type="strand" evidence="9">
    <location>
        <begin position="1028"/>
        <end position="1030"/>
    </location>
</feature>
<feature type="strand" evidence="10">
    <location>
        <begin position="1032"/>
        <end position="1042"/>
    </location>
</feature>
<feature type="strand" evidence="10">
    <location>
        <begin position="1044"/>
        <end position="1048"/>
    </location>
</feature>
<feature type="strand" evidence="10">
    <location>
        <begin position="1051"/>
        <end position="1055"/>
    </location>
</feature>
<feature type="strand" evidence="10">
    <location>
        <begin position="1057"/>
        <end position="1063"/>
    </location>
</feature>
<feature type="strand" evidence="10">
    <location>
        <begin position="1066"/>
        <end position="1076"/>
    </location>
</feature>
<feature type="strand" evidence="10">
    <location>
        <begin position="1078"/>
        <end position="1086"/>
    </location>
</feature>
<feature type="strand" evidence="9">
    <location>
        <begin position="1088"/>
        <end position="1090"/>
    </location>
</feature>
<feature type="strand" evidence="10">
    <location>
        <begin position="1093"/>
        <end position="1101"/>
    </location>
</feature>
<feature type="strand" evidence="10">
    <location>
        <begin position="1104"/>
        <end position="1108"/>
    </location>
</feature>
<feature type="strand" evidence="10">
    <location>
        <begin position="1117"/>
        <end position="1122"/>
    </location>
</feature>
<feature type="strand" evidence="10">
    <location>
        <begin position="1127"/>
        <end position="1131"/>
    </location>
</feature>
<comment type="function">
    <text evidence="4">Attaches the virion to the host receptor LamB, inducing viral DNA ejection. During tail assembly, initiates distal tail tip assembly by interacting with gpI, gpL and gpK. During virus entry to host cell, binds strongly to host LamB in an irreversible attachment. The binding induces structural changes in the tail leading to viral DNA injection through LamB trimeric pore.</text>
</comment>
<comment type="subunit">
    <text evidence="2 3 5 6">Interacts with host LamB.</text>
</comment>
<comment type="subcellular location">
    <subcellularLocation>
        <location evidence="7">Virion</location>
    </subcellularLocation>
    <subcellularLocation>
        <location evidence="7">Host cytoplasm</location>
    </subcellularLocation>
</comment>
<comment type="similarity">
    <text evidence="7">Belongs to the Caudoviricetes tip attachment protein J family.</text>
</comment>
<keyword id="KW-0002">3D-structure</keyword>
<keyword id="KW-1035">Host cytoplasm</keyword>
<keyword id="KW-0945">Host-virus interaction</keyword>
<keyword id="KW-0426">Late protein</keyword>
<keyword id="KW-1185">Reference proteome</keyword>
<keyword id="KW-0677">Repeat</keyword>
<keyword id="KW-1161">Viral attachment to host cell</keyword>
<keyword id="KW-1234">Viral attachment to host entry receptor</keyword>
<keyword id="KW-1171">Viral genome ejection through host cell envelope</keyword>
<keyword id="KW-1243">Viral long flexible tail ejection system</keyword>
<keyword id="KW-1162">Viral penetration into host cytoplasm</keyword>
<keyword id="KW-1188">Viral release from host cell</keyword>
<keyword id="KW-1245">Viral tail assembly</keyword>
<keyword id="KW-1227">Viral tail protein</keyword>
<keyword id="KW-0946">Virion</keyword>
<keyword id="KW-1160">Virus entry into host cell</keyword>
<proteinExistence type="evidence at protein level"/>
<organismHost>
    <name type="scientific">Escherichia coli</name>
    <dbReference type="NCBI Taxonomy" id="562"/>
</organismHost>
<dbReference type="EMBL" id="J02459">
    <property type="protein sequence ID" value="AAA96553.1"/>
    <property type="molecule type" value="Genomic_DNA"/>
</dbReference>
<dbReference type="PIR" id="D43009">
    <property type="entry name" value="QSBPL"/>
</dbReference>
<dbReference type="RefSeq" id="NP_040600.1">
    <property type="nucleotide sequence ID" value="NC_001416.1"/>
</dbReference>
<dbReference type="PDB" id="8IYK">
    <property type="method" value="EM"/>
    <property type="resolution" value="2.95 A"/>
    <property type="chains" value="F/J/Z=1-1132"/>
</dbReference>
<dbReference type="PDB" id="8IYL">
    <property type="method" value="EM"/>
    <property type="resolution" value="3.00 A"/>
    <property type="chains" value="E/J/Y=1-1132"/>
</dbReference>
<dbReference type="PDB" id="8JVM">
    <property type="method" value="EM"/>
    <property type="resolution" value="3.86 A"/>
    <property type="chains" value="F/J/Z=830-995"/>
</dbReference>
<dbReference type="PDB" id="8K35">
    <property type="method" value="EM"/>
    <property type="resolution" value="3.44 A"/>
    <property type="chains" value="A/B/I=1-1132"/>
</dbReference>
<dbReference type="PDB" id="8XCG">
    <property type="method" value="EM"/>
    <property type="resolution" value="3.46 A"/>
    <property type="chains" value="F/J/Z=1-1132"/>
</dbReference>
<dbReference type="PDB" id="8XCI">
    <property type="method" value="EM"/>
    <property type="resolution" value="3.57 A"/>
    <property type="chains" value="F/J/Z=1-1132"/>
</dbReference>
<dbReference type="PDB" id="8XCJ">
    <property type="method" value="EM"/>
    <property type="resolution" value="2.98 A"/>
    <property type="chains" value="F/J/Z=713-1132"/>
</dbReference>
<dbReference type="PDB" id="8XCK">
    <property type="method" value="EM"/>
    <property type="resolution" value="2.75 A"/>
    <property type="chains" value="F/J/Z=713-1132"/>
</dbReference>
<dbReference type="PDBsum" id="8IYK"/>
<dbReference type="PDBsum" id="8IYL"/>
<dbReference type="PDBsum" id="8JVM"/>
<dbReference type="PDBsum" id="8K35"/>
<dbReference type="PDBsum" id="8XCG"/>
<dbReference type="PDBsum" id="8XCI"/>
<dbReference type="PDBsum" id="8XCJ"/>
<dbReference type="PDBsum" id="8XCK"/>
<dbReference type="EMDB" id="EMD-35824"/>
<dbReference type="EMDB" id="EMD-35825"/>
<dbReference type="EMDB" id="EMD-35826"/>
<dbReference type="EMDB" id="EMD-36677"/>
<dbReference type="EMDB" id="EMD-36844"/>
<dbReference type="EMDB" id="EMD-38242"/>
<dbReference type="EMDB" id="EMD-38244"/>
<dbReference type="EMDB" id="EMD-38245"/>
<dbReference type="EMDB" id="EMD-38246"/>
<dbReference type="SMR" id="P03749"/>
<dbReference type="GeneID" id="2703516"/>
<dbReference type="KEGG" id="vg:2703516"/>
<dbReference type="Proteomes" id="UP000001711">
    <property type="component" value="Genome"/>
</dbReference>
<dbReference type="GO" id="GO:0030430">
    <property type="term" value="C:host cell cytoplasm"/>
    <property type="evidence" value="ECO:0007669"/>
    <property type="project" value="UniProtKB-SubCell"/>
</dbReference>
<dbReference type="GO" id="GO:0098015">
    <property type="term" value="C:virus tail"/>
    <property type="evidence" value="ECO:0007669"/>
    <property type="project" value="UniProtKB-KW"/>
</dbReference>
<dbReference type="GO" id="GO:0098670">
    <property type="term" value="P:entry receptor-mediated virion attachment to host cell"/>
    <property type="evidence" value="ECO:0007669"/>
    <property type="project" value="UniProtKB-KW"/>
</dbReference>
<dbReference type="GO" id="GO:0046813">
    <property type="term" value="P:receptor-mediated virion attachment to host cell"/>
    <property type="evidence" value="ECO:0000315"/>
    <property type="project" value="CACAO"/>
</dbReference>
<dbReference type="GO" id="GO:0099001">
    <property type="term" value="P:symbiont genome ejection through host cell envelope, long flexible tail mechanism"/>
    <property type="evidence" value="ECO:0007669"/>
    <property type="project" value="UniProtKB-KW"/>
</dbReference>
<dbReference type="GO" id="GO:0098003">
    <property type="term" value="P:viral tail assembly"/>
    <property type="evidence" value="ECO:0007669"/>
    <property type="project" value="UniProtKB-KW"/>
</dbReference>
<dbReference type="GO" id="GO:0019062">
    <property type="term" value="P:virion attachment to host cell"/>
    <property type="evidence" value="ECO:0000314"/>
    <property type="project" value="UniProtKB"/>
</dbReference>
<dbReference type="CDD" id="cd00063">
    <property type="entry name" value="FN3"/>
    <property type="match status" value="1"/>
</dbReference>
<dbReference type="Gene3D" id="2.60.40.10">
    <property type="entry name" value="Immunoglobulins"/>
    <property type="match status" value="1"/>
</dbReference>
<dbReference type="InterPro" id="IPR003961">
    <property type="entry name" value="FN3_dom"/>
</dbReference>
<dbReference type="InterPro" id="IPR036116">
    <property type="entry name" value="FN3_sf"/>
</dbReference>
<dbReference type="InterPro" id="IPR021034">
    <property type="entry name" value="GpJ_C"/>
</dbReference>
<dbReference type="InterPro" id="IPR015406">
    <property type="entry name" value="GpJ_CSF"/>
</dbReference>
<dbReference type="InterPro" id="IPR055383">
    <property type="entry name" value="GpJ_FNIII-1"/>
</dbReference>
<dbReference type="InterPro" id="IPR055385">
    <property type="entry name" value="GpJ_HDII-ins2"/>
</dbReference>
<dbReference type="InterPro" id="IPR013783">
    <property type="entry name" value="Ig-like_fold"/>
</dbReference>
<dbReference type="InterPro" id="IPR032876">
    <property type="entry name" value="J_dom"/>
</dbReference>
<dbReference type="InterPro" id="IPR053171">
    <property type="entry name" value="Viral_Tip_Attach_Protein"/>
</dbReference>
<dbReference type="PANTHER" id="PTHR36251">
    <property type="entry name" value="FELS-1 PROPHAGE HOST SPECIFICITY PROTEIN-RELATED"/>
    <property type="match status" value="1"/>
</dbReference>
<dbReference type="PANTHER" id="PTHR36251:SF2">
    <property type="entry name" value="GIFSY-2 PROPHAGE HOST SPECIFICITY PROTEIN J, PHAGE LAMBDA"/>
    <property type="match status" value="1"/>
</dbReference>
<dbReference type="Pfam" id="PF24801">
    <property type="entry name" value="FNIII-A_GpJ"/>
    <property type="match status" value="1"/>
</dbReference>
<dbReference type="Pfam" id="PF12421">
    <property type="entry name" value="Ig_GpJ_C"/>
    <property type="match status" value="1"/>
</dbReference>
<dbReference type="Pfam" id="PF24421">
    <property type="entry name" value="Ig_J"/>
    <property type="match status" value="1"/>
</dbReference>
<dbReference type="Pfam" id="PF24489">
    <property type="entry name" value="Ig_J_second"/>
    <property type="match status" value="1"/>
</dbReference>
<dbReference type="Pfam" id="PF13550">
    <property type="entry name" value="Phage-tail_3"/>
    <property type="match status" value="1"/>
</dbReference>
<dbReference type="Pfam" id="PF09327">
    <property type="entry name" value="Phage_Tail_Tip"/>
    <property type="match status" value="1"/>
</dbReference>
<dbReference type="SMART" id="SM00060">
    <property type="entry name" value="FN3"/>
    <property type="match status" value="2"/>
</dbReference>
<dbReference type="SUPFAM" id="SSF49265">
    <property type="entry name" value="Fibronectin type III"/>
    <property type="match status" value="1"/>
</dbReference>
<dbReference type="PROSITE" id="PS50853">
    <property type="entry name" value="FN3"/>
    <property type="match status" value="1"/>
</dbReference>
<name>TIPJ_LAMBD</name>
<organism>
    <name type="scientific">Escherichia phage lambda</name>
    <name type="common">Bacteriophage lambda</name>
    <dbReference type="NCBI Taxonomy" id="2681611"/>
    <lineage>
        <taxon>Viruses</taxon>
        <taxon>Duplodnaviria</taxon>
        <taxon>Heunggongvirae</taxon>
        <taxon>Uroviricota</taxon>
        <taxon>Caudoviricetes</taxon>
        <taxon>Lambdavirus</taxon>
        <taxon>Lambdavirus lambda</taxon>
    </lineage>
</organism>